<dbReference type="EC" id="3.6.1.54" evidence="1"/>
<dbReference type="EMBL" id="AE004439">
    <property type="protein sequence ID" value="AAK02186.1"/>
    <property type="molecule type" value="Genomic_DNA"/>
</dbReference>
<dbReference type="RefSeq" id="WP_005719914.1">
    <property type="nucleotide sequence ID" value="NC_002663.1"/>
</dbReference>
<dbReference type="SMR" id="Q9CPE3"/>
<dbReference type="STRING" id="272843.PM0102"/>
<dbReference type="EnsemblBacteria" id="AAK02186">
    <property type="protein sequence ID" value="AAK02186"/>
    <property type="gene ID" value="PM0102"/>
</dbReference>
<dbReference type="GeneID" id="77207449"/>
<dbReference type="KEGG" id="pmu:PM0102"/>
<dbReference type="PATRIC" id="fig|272843.6.peg.105"/>
<dbReference type="HOGENOM" id="CLU_074586_0_0_6"/>
<dbReference type="OrthoDB" id="9783283at2"/>
<dbReference type="UniPathway" id="UPA00359">
    <property type="reaction ID" value="UER00480"/>
</dbReference>
<dbReference type="Proteomes" id="UP000000809">
    <property type="component" value="Chromosome"/>
</dbReference>
<dbReference type="GO" id="GO:0005737">
    <property type="term" value="C:cytoplasm"/>
    <property type="evidence" value="ECO:0007669"/>
    <property type="project" value="InterPro"/>
</dbReference>
<dbReference type="GO" id="GO:0019897">
    <property type="term" value="C:extrinsic component of plasma membrane"/>
    <property type="evidence" value="ECO:0007669"/>
    <property type="project" value="UniProtKB-UniRule"/>
</dbReference>
<dbReference type="GO" id="GO:0030145">
    <property type="term" value="F:manganese ion binding"/>
    <property type="evidence" value="ECO:0007669"/>
    <property type="project" value="UniProtKB-UniRule"/>
</dbReference>
<dbReference type="GO" id="GO:0008758">
    <property type="term" value="F:UDP-2,3-diacylglucosamine hydrolase activity"/>
    <property type="evidence" value="ECO:0007669"/>
    <property type="project" value="UniProtKB-UniRule"/>
</dbReference>
<dbReference type="GO" id="GO:0009245">
    <property type="term" value="P:lipid A biosynthetic process"/>
    <property type="evidence" value="ECO:0007669"/>
    <property type="project" value="UniProtKB-UniRule"/>
</dbReference>
<dbReference type="CDD" id="cd07398">
    <property type="entry name" value="MPP_YbbF-LpxH"/>
    <property type="match status" value="1"/>
</dbReference>
<dbReference type="Gene3D" id="3.60.21.10">
    <property type="match status" value="1"/>
</dbReference>
<dbReference type="HAMAP" id="MF_00575">
    <property type="entry name" value="LpxH"/>
    <property type="match status" value="1"/>
</dbReference>
<dbReference type="InterPro" id="IPR004843">
    <property type="entry name" value="Calcineurin-like_PHP_ApaH"/>
</dbReference>
<dbReference type="InterPro" id="IPR043461">
    <property type="entry name" value="LpxH-like"/>
</dbReference>
<dbReference type="InterPro" id="IPR029052">
    <property type="entry name" value="Metallo-depent_PP-like"/>
</dbReference>
<dbReference type="InterPro" id="IPR010138">
    <property type="entry name" value="UDP-diacylglucosamine_Hdrlase"/>
</dbReference>
<dbReference type="NCBIfam" id="TIGR01854">
    <property type="entry name" value="lipid_A_lpxH"/>
    <property type="match status" value="1"/>
</dbReference>
<dbReference type="NCBIfam" id="NF003743">
    <property type="entry name" value="PRK05340.1"/>
    <property type="match status" value="1"/>
</dbReference>
<dbReference type="PANTHER" id="PTHR34990:SF1">
    <property type="entry name" value="UDP-2,3-DIACYLGLUCOSAMINE HYDROLASE"/>
    <property type="match status" value="1"/>
</dbReference>
<dbReference type="PANTHER" id="PTHR34990">
    <property type="entry name" value="UDP-2,3-DIACYLGLUCOSAMINE HYDROLASE-RELATED"/>
    <property type="match status" value="1"/>
</dbReference>
<dbReference type="Pfam" id="PF00149">
    <property type="entry name" value="Metallophos"/>
    <property type="match status" value="1"/>
</dbReference>
<dbReference type="SUPFAM" id="SSF56300">
    <property type="entry name" value="Metallo-dependent phosphatases"/>
    <property type="match status" value="1"/>
</dbReference>
<reference key="1">
    <citation type="journal article" date="2001" name="Proc. Natl. Acad. Sci. U.S.A.">
        <title>Complete genomic sequence of Pasteurella multocida Pm70.</title>
        <authorList>
            <person name="May B.J."/>
            <person name="Zhang Q."/>
            <person name="Li L.L."/>
            <person name="Paustian M.L."/>
            <person name="Whittam T.S."/>
            <person name="Kapur V."/>
        </authorList>
    </citation>
    <scope>NUCLEOTIDE SEQUENCE [LARGE SCALE GENOMIC DNA]</scope>
    <source>
        <strain>Pm70</strain>
    </source>
</reference>
<proteinExistence type="inferred from homology"/>
<protein>
    <recommendedName>
        <fullName evidence="1">UDP-2,3-diacylglucosamine hydrolase</fullName>
        <ecNumber evidence="1">3.6.1.54</ecNumber>
    </recommendedName>
    <alternativeName>
        <fullName evidence="1">UDP-2,3-diacylglucosamine diphosphatase</fullName>
    </alternativeName>
</protein>
<organism>
    <name type="scientific">Pasteurella multocida (strain Pm70)</name>
    <dbReference type="NCBI Taxonomy" id="272843"/>
    <lineage>
        <taxon>Bacteria</taxon>
        <taxon>Pseudomonadati</taxon>
        <taxon>Pseudomonadota</taxon>
        <taxon>Gammaproteobacteria</taxon>
        <taxon>Pasteurellales</taxon>
        <taxon>Pasteurellaceae</taxon>
        <taxon>Pasteurella</taxon>
    </lineage>
</organism>
<gene>
    <name evidence="1" type="primary">lpxH</name>
    <name type="ordered locus">PM0102</name>
</gene>
<sequence>MKKTYFIADLHLSENRPHLTHLFCDFMQQLAPQAEALYILGDLFDFWIGDDEESALIHTVQQQIHALSAQGVKCYFQHGNRDFLIGKRFAAACGMTLLPTYQRIALYGESVLLCHGDTLCIDDVAYQQYRKKVHQKWRQWLFLHLPLKVRLKIAEKIRARSKADKKRKSEEIMDVNPDFVLQTFAQFGVKKIIHGHTHRQHIHHIPPHFTRIVLGDWGDTASILEVNEQQQVRFLTGKE</sequence>
<keyword id="KW-0997">Cell inner membrane</keyword>
<keyword id="KW-1003">Cell membrane</keyword>
<keyword id="KW-0378">Hydrolase</keyword>
<keyword id="KW-0441">Lipid A biosynthesis</keyword>
<keyword id="KW-0444">Lipid biosynthesis</keyword>
<keyword id="KW-0443">Lipid metabolism</keyword>
<keyword id="KW-0464">Manganese</keyword>
<keyword id="KW-0472">Membrane</keyword>
<keyword id="KW-0479">Metal-binding</keyword>
<keyword id="KW-1185">Reference proteome</keyword>
<name>LPXH_PASMU</name>
<feature type="chain" id="PRO_0000214115" description="UDP-2,3-diacylglucosamine hydrolase">
    <location>
        <begin position="1"/>
        <end position="239"/>
    </location>
</feature>
<feature type="binding site" evidence="1">
    <location>
        <position position="9"/>
    </location>
    <ligand>
        <name>Mn(2+)</name>
        <dbReference type="ChEBI" id="CHEBI:29035"/>
        <label>1</label>
    </ligand>
</feature>
<feature type="binding site" evidence="1">
    <location>
        <position position="11"/>
    </location>
    <ligand>
        <name>Mn(2+)</name>
        <dbReference type="ChEBI" id="CHEBI:29035"/>
        <label>1</label>
    </ligand>
</feature>
<feature type="binding site" evidence="1">
    <location>
        <position position="42"/>
    </location>
    <ligand>
        <name>Mn(2+)</name>
        <dbReference type="ChEBI" id="CHEBI:29035"/>
        <label>1</label>
    </ligand>
</feature>
<feature type="binding site" evidence="1">
    <location>
        <position position="42"/>
    </location>
    <ligand>
        <name>Mn(2+)</name>
        <dbReference type="ChEBI" id="CHEBI:29035"/>
        <label>2</label>
    </ligand>
</feature>
<feature type="binding site" evidence="1">
    <location>
        <begin position="80"/>
        <end position="81"/>
    </location>
    <ligand>
        <name>substrate</name>
    </ligand>
</feature>
<feature type="binding site" evidence="1">
    <location>
        <position position="80"/>
    </location>
    <ligand>
        <name>Mn(2+)</name>
        <dbReference type="ChEBI" id="CHEBI:29035"/>
        <label>2</label>
    </ligand>
</feature>
<feature type="binding site" evidence="1">
    <location>
        <position position="115"/>
    </location>
    <ligand>
        <name>Mn(2+)</name>
        <dbReference type="ChEBI" id="CHEBI:29035"/>
        <label>2</label>
    </ligand>
</feature>
<feature type="binding site" evidence="1">
    <location>
        <position position="123"/>
    </location>
    <ligand>
        <name>substrate</name>
    </ligand>
</feature>
<feature type="binding site" evidence="1">
    <location>
        <position position="161"/>
    </location>
    <ligand>
        <name>substrate</name>
    </ligand>
</feature>
<feature type="binding site" evidence="1">
    <location>
        <position position="165"/>
    </location>
    <ligand>
        <name>substrate</name>
    </ligand>
</feature>
<feature type="binding site" evidence="1">
    <location>
        <position position="168"/>
    </location>
    <ligand>
        <name>substrate</name>
    </ligand>
</feature>
<feature type="binding site" evidence="1">
    <location>
        <position position="196"/>
    </location>
    <ligand>
        <name>Mn(2+)</name>
        <dbReference type="ChEBI" id="CHEBI:29035"/>
        <label>2</label>
    </ligand>
</feature>
<feature type="binding site" evidence="1">
    <location>
        <position position="196"/>
    </location>
    <ligand>
        <name>substrate</name>
    </ligand>
</feature>
<feature type="binding site" evidence="1">
    <location>
        <position position="198"/>
    </location>
    <ligand>
        <name>Mn(2+)</name>
        <dbReference type="ChEBI" id="CHEBI:29035"/>
        <label>1</label>
    </ligand>
</feature>
<comment type="function">
    <text evidence="1">Hydrolyzes the pyrophosphate bond of UDP-2,3-diacylglucosamine to yield 2,3-diacylglucosamine 1-phosphate (lipid X) and UMP by catalyzing the attack of water at the alpha-P atom. Involved in the biosynthesis of lipid A, a phosphorylated glycolipid that anchors the lipopolysaccharide to the outer membrane of the cell.</text>
</comment>
<comment type="catalytic activity">
    <reaction evidence="1">
        <text>UDP-2-N,3-O-bis[(3R)-3-hydroxytetradecanoyl]-alpha-D-glucosamine + H2O = 2-N,3-O-bis[(3R)-3-hydroxytetradecanoyl]-alpha-D-glucosaminyl 1-phosphate + UMP + 2 H(+)</text>
        <dbReference type="Rhea" id="RHEA:25213"/>
        <dbReference type="ChEBI" id="CHEBI:15377"/>
        <dbReference type="ChEBI" id="CHEBI:15378"/>
        <dbReference type="ChEBI" id="CHEBI:57865"/>
        <dbReference type="ChEBI" id="CHEBI:57957"/>
        <dbReference type="ChEBI" id="CHEBI:78847"/>
        <dbReference type="EC" id="3.6.1.54"/>
    </reaction>
</comment>
<comment type="cofactor">
    <cofactor evidence="1">
        <name>Mn(2+)</name>
        <dbReference type="ChEBI" id="CHEBI:29035"/>
    </cofactor>
    <text evidence="1">Binds 2 Mn(2+) ions per subunit in a binuclear metal center.</text>
</comment>
<comment type="pathway">
    <text evidence="1">Glycolipid biosynthesis; lipid IV(A) biosynthesis; lipid IV(A) from (3R)-3-hydroxytetradecanoyl-[acyl-carrier-protein] and UDP-N-acetyl-alpha-D-glucosamine: step 4/6.</text>
</comment>
<comment type="subcellular location">
    <subcellularLocation>
        <location evidence="1">Cell inner membrane</location>
        <topology evidence="1">Peripheral membrane protein</topology>
        <orientation evidence="1">Cytoplasmic side</orientation>
    </subcellularLocation>
</comment>
<comment type="similarity">
    <text evidence="1">Belongs to the LpxH family.</text>
</comment>
<evidence type="ECO:0000255" key="1">
    <source>
        <dbReference type="HAMAP-Rule" id="MF_00575"/>
    </source>
</evidence>
<accession>Q9CPE3</accession>